<feature type="chain" id="PRO_1000129996" description="Chaperonin GroEL">
    <location>
        <begin position="1"/>
        <end position="537"/>
    </location>
</feature>
<feature type="binding site" evidence="1">
    <location>
        <begin position="30"/>
        <end position="33"/>
    </location>
    <ligand>
        <name>ATP</name>
        <dbReference type="ChEBI" id="CHEBI:30616"/>
    </ligand>
</feature>
<feature type="binding site" evidence="1">
    <location>
        <begin position="87"/>
        <end position="91"/>
    </location>
    <ligand>
        <name>ATP</name>
        <dbReference type="ChEBI" id="CHEBI:30616"/>
    </ligand>
</feature>
<feature type="binding site" evidence="1">
    <location>
        <position position="414"/>
    </location>
    <ligand>
        <name>ATP</name>
        <dbReference type="ChEBI" id="CHEBI:30616"/>
    </ligand>
</feature>
<feature type="binding site" evidence="1">
    <location>
        <begin position="477"/>
        <end position="479"/>
    </location>
    <ligand>
        <name>ATP</name>
        <dbReference type="ChEBI" id="CHEBI:30616"/>
    </ligand>
</feature>
<feature type="binding site" evidence="1">
    <location>
        <position position="493"/>
    </location>
    <ligand>
        <name>ATP</name>
        <dbReference type="ChEBI" id="CHEBI:30616"/>
    </ligand>
</feature>
<comment type="function">
    <text evidence="1">Together with its co-chaperonin GroES, plays an essential role in assisting protein folding. The GroEL-GroES system forms a nano-cage that allows encapsulation of the non-native substrate proteins and provides a physical environment optimized to promote and accelerate protein folding.</text>
</comment>
<comment type="catalytic activity">
    <reaction evidence="1">
        <text>ATP + H2O + a folded polypeptide = ADP + phosphate + an unfolded polypeptide.</text>
        <dbReference type="EC" id="5.6.1.7"/>
    </reaction>
</comment>
<comment type="subunit">
    <text evidence="1">Forms a cylinder of 14 subunits composed of two heptameric rings stacked back-to-back. Interacts with the co-chaperonin GroES.</text>
</comment>
<comment type="subcellular location">
    <subcellularLocation>
        <location evidence="1">Cytoplasm</location>
    </subcellularLocation>
</comment>
<comment type="similarity">
    <text evidence="1">Belongs to the chaperonin (HSP60) family.</text>
</comment>
<dbReference type="EC" id="5.6.1.7" evidence="1"/>
<dbReference type="EMBL" id="CP001145">
    <property type="protein sequence ID" value="ACI17539.1"/>
    <property type="molecule type" value="Genomic_DNA"/>
</dbReference>
<dbReference type="RefSeq" id="WP_012544191.1">
    <property type="nucleotide sequence ID" value="NC_011295.1"/>
</dbReference>
<dbReference type="SMR" id="B5Y894"/>
<dbReference type="STRING" id="309798.COPRO5265_0636"/>
<dbReference type="KEGG" id="cpo:COPRO5265_0636"/>
<dbReference type="eggNOG" id="COG0459">
    <property type="taxonomic scope" value="Bacteria"/>
</dbReference>
<dbReference type="HOGENOM" id="CLU_016503_3_0_9"/>
<dbReference type="OrthoDB" id="9766614at2"/>
<dbReference type="Proteomes" id="UP000001732">
    <property type="component" value="Chromosome"/>
</dbReference>
<dbReference type="GO" id="GO:0005737">
    <property type="term" value="C:cytoplasm"/>
    <property type="evidence" value="ECO:0007669"/>
    <property type="project" value="UniProtKB-SubCell"/>
</dbReference>
<dbReference type="GO" id="GO:0005524">
    <property type="term" value="F:ATP binding"/>
    <property type="evidence" value="ECO:0007669"/>
    <property type="project" value="UniProtKB-UniRule"/>
</dbReference>
<dbReference type="GO" id="GO:0140662">
    <property type="term" value="F:ATP-dependent protein folding chaperone"/>
    <property type="evidence" value="ECO:0007669"/>
    <property type="project" value="InterPro"/>
</dbReference>
<dbReference type="GO" id="GO:0016853">
    <property type="term" value="F:isomerase activity"/>
    <property type="evidence" value="ECO:0007669"/>
    <property type="project" value="UniProtKB-KW"/>
</dbReference>
<dbReference type="GO" id="GO:0051082">
    <property type="term" value="F:unfolded protein binding"/>
    <property type="evidence" value="ECO:0007669"/>
    <property type="project" value="UniProtKB-UniRule"/>
</dbReference>
<dbReference type="GO" id="GO:0042026">
    <property type="term" value="P:protein refolding"/>
    <property type="evidence" value="ECO:0007669"/>
    <property type="project" value="UniProtKB-UniRule"/>
</dbReference>
<dbReference type="CDD" id="cd03344">
    <property type="entry name" value="GroEL"/>
    <property type="match status" value="1"/>
</dbReference>
<dbReference type="FunFam" id="3.50.7.10:FF:000001">
    <property type="entry name" value="60 kDa chaperonin"/>
    <property type="match status" value="1"/>
</dbReference>
<dbReference type="Gene3D" id="3.50.7.10">
    <property type="entry name" value="GroEL"/>
    <property type="match status" value="1"/>
</dbReference>
<dbReference type="Gene3D" id="1.10.560.10">
    <property type="entry name" value="GroEL-like equatorial domain"/>
    <property type="match status" value="1"/>
</dbReference>
<dbReference type="Gene3D" id="3.30.260.10">
    <property type="entry name" value="TCP-1-like chaperonin intermediate domain"/>
    <property type="match status" value="1"/>
</dbReference>
<dbReference type="HAMAP" id="MF_00600">
    <property type="entry name" value="CH60"/>
    <property type="match status" value="1"/>
</dbReference>
<dbReference type="InterPro" id="IPR018370">
    <property type="entry name" value="Chaperonin_Cpn60_CS"/>
</dbReference>
<dbReference type="InterPro" id="IPR001844">
    <property type="entry name" value="Cpn60/GroEL"/>
</dbReference>
<dbReference type="InterPro" id="IPR002423">
    <property type="entry name" value="Cpn60/GroEL/TCP-1"/>
</dbReference>
<dbReference type="InterPro" id="IPR027409">
    <property type="entry name" value="GroEL-like_apical_dom_sf"/>
</dbReference>
<dbReference type="InterPro" id="IPR027413">
    <property type="entry name" value="GROEL-like_equatorial_sf"/>
</dbReference>
<dbReference type="InterPro" id="IPR027410">
    <property type="entry name" value="TCP-1-like_intermed_sf"/>
</dbReference>
<dbReference type="NCBIfam" id="TIGR02348">
    <property type="entry name" value="GroEL"/>
    <property type="match status" value="1"/>
</dbReference>
<dbReference type="NCBIfam" id="NF000592">
    <property type="entry name" value="PRK00013.1"/>
    <property type="match status" value="1"/>
</dbReference>
<dbReference type="NCBIfam" id="NF009487">
    <property type="entry name" value="PRK12849.1"/>
    <property type="match status" value="1"/>
</dbReference>
<dbReference type="NCBIfam" id="NF009488">
    <property type="entry name" value="PRK12850.1"/>
    <property type="match status" value="1"/>
</dbReference>
<dbReference type="NCBIfam" id="NF009489">
    <property type="entry name" value="PRK12851.1"/>
    <property type="match status" value="1"/>
</dbReference>
<dbReference type="PANTHER" id="PTHR45633">
    <property type="entry name" value="60 KDA HEAT SHOCK PROTEIN, MITOCHONDRIAL"/>
    <property type="match status" value="1"/>
</dbReference>
<dbReference type="Pfam" id="PF00118">
    <property type="entry name" value="Cpn60_TCP1"/>
    <property type="match status" value="1"/>
</dbReference>
<dbReference type="PRINTS" id="PR00298">
    <property type="entry name" value="CHAPERONIN60"/>
</dbReference>
<dbReference type="SUPFAM" id="SSF52029">
    <property type="entry name" value="GroEL apical domain-like"/>
    <property type="match status" value="1"/>
</dbReference>
<dbReference type="SUPFAM" id="SSF48592">
    <property type="entry name" value="GroEL equatorial domain-like"/>
    <property type="match status" value="2"/>
</dbReference>
<dbReference type="PROSITE" id="PS00296">
    <property type="entry name" value="CHAPERONINS_CPN60"/>
    <property type="match status" value="1"/>
</dbReference>
<accession>B5Y894</accession>
<keyword id="KW-0067">ATP-binding</keyword>
<keyword id="KW-0143">Chaperone</keyword>
<keyword id="KW-0963">Cytoplasm</keyword>
<keyword id="KW-0413">Isomerase</keyword>
<keyword id="KW-0547">Nucleotide-binding</keyword>
<keyword id="KW-1185">Reference proteome</keyword>
<sequence length="537" mass="57887">MAAKLIAFDEEARSKLLTGVLKLSKAVKATLGPKGRYVVLERKFGSPLITNDGVTIAKEIDLEDPYENLGAQLAKEVASKTNDVAGDGTTTATVLAEAMVREGMKNVTAGANPIALRRGIEKAVEAVTEEIKKLSRPVSGKRDITEVATISAKDQQIGSIIAEAMEKVGKDGVVTVEEGKSLGMELEFVEGMQFDRGYVSPYFVTDPERMETVLEDPLIVITDKKISNVQEFLPLLEKIVQYGRSFLLIADDVEGEALATLVVNKLRGTFNCVAVKAPGFGDRRKEMLQDIAIVTGGQVISEELGVSFESVTPDMFGHARSVKVDKESTTIVGGKGSSEEIEKRIAQIRKQLETTESEYEKEKLQERLAKLAGGVAVIKVGAATETEMKEKKHRVEDAVSATKAAMEEGIVAGGGVTLVKASTVLDKLPLENDELIGATIVKKALMEPARVIAENAGFAGEVVVEELKKREYPVGFDAVKGEYVDMFEAGIIDPTKVTRSALQNAASIAAMVLTTEALVVEKPEQEKAQPGMPPEEY</sequence>
<protein>
    <recommendedName>
        <fullName evidence="1">Chaperonin GroEL</fullName>
        <ecNumber evidence="1">5.6.1.7</ecNumber>
    </recommendedName>
    <alternativeName>
        <fullName evidence="1">60 kDa chaperonin</fullName>
    </alternativeName>
    <alternativeName>
        <fullName evidence="1">Chaperonin-60</fullName>
        <shortName evidence="1">Cpn60</shortName>
    </alternativeName>
</protein>
<evidence type="ECO:0000255" key="1">
    <source>
        <dbReference type="HAMAP-Rule" id="MF_00600"/>
    </source>
</evidence>
<name>CH60_COPPD</name>
<reference key="1">
    <citation type="submission" date="2008-08" db="EMBL/GenBank/DDBJ databases">
        <title>The complete genome sequence of Coprothermobacter proteolyticus strain ATCC 5245 / DSM 5265 / BT.</title>
        <authorList>
            <person name="Dodson R.J."/>
            <person name="Durkin A.S."/>
            <person name="Wu M."/>
            <person name="Eisen J."/>
            <person name="Sutton G."/>
        </authorList>
    </citation>
    <scope>NUCLEOTIDE SEQUENCE [LARGE SCALE GENOMIC DNA]</scope>
    <source>
        <strain>ATCC 35245 / DSM 5265 / OCM 4 / BT</strain>
    </source>
</reference>
<proteinExistence type="inferred from homology"/>
<gene>
    <name evidence="1" type="primary">groEL</name>
    <name evidence="1" type="synonym">groL</name>
    <name type="ordered locus">COPRO5265_0636</name>
</gene>
<organism>
    <name type="scientific">Coprothermobacter proteolyticus (strain ATCC 35245 / DSM 5265 / OCM 4 / BT)</name>
    <dbReference type="NCBI Taxonomy" id="309798"/>
    <lineage>
        <taxon>Bacteria</taxon>
        <taxon>Pseudomonadati</taxon>
        <taxon>Coprothermobacterota</taxon>
        <taxon>Coprothermobacteria</taxon>
        <taxon>Coprothermobacterales</taxon>
        <taxon>Coprothermobacteraceae</taxon>
        <taxon>Coprothermobacter</taxon>
    </lineage>
</organism>